<accession>A1TLS9</accession>
<organism>
    <name type="scientific">Paracidovorax citrulli (strain AAC00-1)</name>
    <name type="common">Acidovorax citrulli</name>
    <dbReference type="NCBI Taxonomy" id="397945"/>
    <lineage>
        <taxon>Bacteria</taxon>
        <taxon>Pseudomonadati</taxon>
        <taxon>Pseudomonadota</taxon>
        <taxon>Betaproteobacteria</taxon>
        <taxon>Burkholderiales</taxon>
        <taxon>Comamonadaceae</taxon>
        <taxon>Paracidovorax</taxon>
    </lineage>
</organism>
<comment type="catalytic activity">
    <reaction evidence="1">
        <text>D-arabinose 5-phosphate + phosphoenolpyruvate + H2O = 3-deoxy-alpha-D-manno-2-octulosonate-8-phosphate + phosphate</text>
        <dbReference type="Rhea" id="RHEA:14053"/>
        <dbReference type="ChEBI" id="CHEBI:15377"/>
        <dbReference type="ChEBI" id="CHEBI:43474"/>
        <dbReference type="ChEBI" id="CHEBI:57693"/>
        <dbReference type="ChEBI" id="CHEBI:58702"/>
        <dbReference type="ChEBI" id="CHEBI:85985"/>
        <dbReference type="EC" id="2.5.1.55"/>
    </reaction>
</comment>
<comment type="pathway">
    <text evidence="1">Carbohydrate biosynthesis; 3-deoxy-D-manno-octulosonate biosynthesis; 3-deoxy-D-manno-octulosonate from D-ribulose 5-phosphate: step 2/3.</text>
</comment>
<comment type="pathway">
    <text evidence="1">Bacterial outer membrane biogenesis; lipopolysaccharide biosynthesis.</text>
</comment>
<comment type="subcellular location">
    <subcellularLocation>
        <location evidence="1">Cytoplasm</location>
    </subcellularLocation>
</comment>
<comment type="similarity">
    <text evidence="1">Belongs to the KdsA family.</text>
</comment>
<sequence length="285" mass="30584">MKLCGFDVGLDRPFFLIAGPCVIESEQLQMDVAGRLKETTAALGIPFIFKSSFDKANRSSGTSFRGPGREKGLEILAKIRRELNVPVLTDVHTEDDITEAAKVVDVLQTPAFLCRQTDFIRAVAQSGKPVNIKKGQFLAPHDMKNVIDKARAAAREKGLPEDSFMACERGASFGYNNLVSDMRGLAIMRETGAPVVFDATHSVQLPGGQGTSSGGQREMVPVLARAAVAVGVAGLFMETHPDPCNALSDGPNAVPLKHMKALLETLVALDSVTKRNGFLENDFGA</sequence>
<reference key="1">
    <citation type="submission" date="2006-12" db="EMBL/GenBank/DDBJ databases">
        <title>Complete sequence of Acidovorax avenae subsp. citrulli AAC00-1.</title>
        <authorList>
            <person name="Copeland A."/>
            <person name="Lucas S."/>
            <person name="Lapidus A."/>
            <person name="Barry K."/>
            <person name="Detter J.C."/>
            <person name="Glavina del Rio T."/>
            <person name="Dalin E."/>
            <person name="Tice H."/>
            <person name="Pitluck S."/>
            <person name="Kiss H."/>
            <person name="Brettin T."/>
            <person name="Bruce D."/>
            <person name="Han C."/>
            <person name="Tapia R."/>
            <person name="Gilna P."/>
            <person name="Schmutz J."/>
            <person name="Larimer F."/>
            <person name="Land M."/>
            <person name="Hauser L."/>
            <person name="Kyrpides N."/>
            <person name="Kim E."/>
            <person name="Stahl D."/>
            <person name="Richardson P."/>
        </authorList>
    </citation>
    <scope>NUCLEOTIDE SEQUENCE [LARGE SCALE GENOMIC DNA]</scope>
    <source>
        <strain>AAC00-1</strain>
    </source>
</reference>
<evidence type="ECO:0000255" key="1">
    <source>
        <dbReference type="HAMAP-Rule" id="MF_00056"/>
    </source>
</evidence>
<name>KDSA_PARC0</name>
<protein>
    <recommendedName>
        <fullName evidence="1">2-dehydro-3-deoxyphosphooctonate aldolase</fullName>
        <ecNumber evidence="1">2.5.1.55</ecNumber>
    </recommendedName>
    <alternativeName>
        <fullName evidence="1">3-deoxy-D-manno-octulosonic acid 8-phosphate synthase</fullName>
    </alternativeName>
    <alternativeName>
        <fullName evidence="1">KDO-8-phosphate synthase</fullName>
        <shortName evidence="1">KDO 8-P synthase</shortName>
        <shortName evidence="1">KDOPS</shortName>
    </alternativeName>
    <alternativeName>
        <fullName evidence="1">Phospho-2-dehydro-3-deoxyoctonate aldolase</fullName>
    </alternativeName>
</protein>
<keyword id="KW-0963">Cytoplasm</keyword>
<keyword id="KW-0448">Lipopolysaccharide biosynthesis</keyword>
<keyword id="KW-0808">Transferase</keyword>
<dbReference type="EC" id="2.5.1.55" evidence="1"/>
<dbReference type="EMBL" id="CP000512">
    <property type="protein sequence ID" value="ABM31917.1"/>
    <property type="molecule type" value="Genomic_DNA"/>
</dbReference>
<dbReference type="RefSeq" id="WP_011794469.1">
    <property type="nucleotide sequence ID" value="NC_008752.1"/>
</dbReference>
<dbReference type="SMR" id="A1TLS9"/>
<dbReference type="STRING" id="397945.Aave_1326"/>
<dbReference type="GeneID" id="79790989"/>
<dbReference type="KEGG" id="aav:Aave_1326"/>
<dbReference type="eggNOG" id="COG2877">
    <property type="taxonomic scope" value="Bacteria"/>
</dbReference>
<dbReference type="HOGENOM" id="CLU_036666_0_0_4"/>
<dbReference type="OrthoDB" id="9776934at2"/>
<dbReference type="UniPathway" id="UPA00030"/>
<dbReference type="UniPathway" id="UPA00357">
    <property type="reaction ID" value="UER00474"/>
</dbReference>
<dbReference type="Proteomes" id="UP000002596">
    <property type="component" value="Chromosome"/>
</dbReference>
<dbReference type="GO" id="GO:0005737">
    <property type="term" value="C:cytoplasm"/>
    <property type="evidence" value="ECO:0007669"/>
    <property type="project" value="UniProtKB-SubCell"/>
</dbReference>
<dbReference type="GO" id="GO:0008676">
    <property type="term" value="F:3-deoxy-8-phosphooctulonate synthase activity"/>
    <property type="evidence" value="ECO:0007669"/>
    <property type="project" value="UniProtKB-UniRule"/>
</dbReference>
<dbReference type="GO" id="GO:0019294">
    <property type="term" value="P:keto-3-deoxy-D-manno-octulosonic acid biosynthetic process"/>
    <property type="evidence" value="ECO:0007669"/>
    <property type="project" value="UniProtKB-UniRule"/>
</dbReference>
<dbReference type="Gene3D" id="3.20.20.70">
    <property type="entry name" value="Aldolase class I"/>
    <property type="match status" value="1"/>
</dbReference>
<dbReference type="HAMAP" id="MF_00056">
    <property type="entry name" value="KDO8P_synth"/>
    <property type="match status" value="1"/>
</dbReference>
<dbReference type="InterPro" id="IPR013785">
    <property type="entry name" value="Aldolase_TIM"/>
</dbReference>
<dbReference type="InterPro" id="IPR006218">
    <property type="entry name" value="DAHP1/KDSA"/>
</dbReference>
<dbReference type="InterPro" id="IPR006269">
    <property type="entry name" value="KDO8P_synthase"/>
</dbReference>
<dbReference type="NCBIfam" id="TIGR01362">
    <property type="entry name" value="KDO8P_synth"/>
    <property type="match status" value="1"/>
</dbReference>
<dbReference type="NCBIfam" id="NF003543">
    <property type="entry name" value="PRK05198.1"/>
    <property type="match status" value="1"/>
</dbReference>
<dbReference type="PANTHER" id="PTHR21057">
    <property type="entry name" value="PHOSPHO-2-DEHYDRO-3-DEOXYHEPTONATE ALDOLASE"/>
    <property type="match status" value="1"/>
</dbReference>
<dbReference type="Pfam" id="PF00793">
    <property type="entry name" value="DAHP_synth_1"/>
    <property type="match status" value="1"/>
</dbReference>
<dbReference type="SUPFAM" id="SSF51569">
    <property type="entry name" value="Aldolase"/>
    <property type="match status" value="1"/>
</dbReference>
<feature type="chain" id="PRO_0000304427" description="2-dehydro-3-deoxyphosphooctonate aldolase">
    <location>
        <begin position="1"/>
        <end position="285"/>
    </location>
</feature>
<gene>
    <name evidence="1" type="primary">kdsA</name>
    <name type="ordered locus">Aave_1326</name>
</gene>
<proteinExistence type="inferred from homology"/>